<comment type="function">
    <text evidence="4">Catalyzes the ATP-dependent biosynthesis of glutamine from glutamate and ammonia.</text>
</comment>
<comment type="catalytic activity">
    <reaction evidence="3">
        <text>L-glutamate + NH4(+) + ATP = L-glutamine + ADP + phosphate + H(+)</text>
        <dbReference type="Rhea" id="RHEA:16169"/>
        <dbReference type="ChEBI" id="CHEBI:15378"/>
        <dbReference type="ChEBI" id="CHEBI:28938"/>
        <dbReference type="ChEBI" id="CHEBI:29985"/>
        <dbReference type="ChEBI" id="CHEBI:30616"/>
        <dbReference type="ChEBI" id="CHEBI:43474"/>
        <dbReference type="ChEBI" id="CHEBI:58359"/>
        <dbReference type="ChEBI" id="CHEBI:456216"/>
        <dbReference type="EC" id="6.3.1.2"/>
    </reaction>
</comment>
<comment type="cofactor">
    <cofactor evidence="3">
        <name>Mg(2+)</name>
        <dbReference type="ChEBI" id="CHEBI:18420"/>
    </cofactor>
</comment>
<comment type="subunit">
    <text evidence="4">Homooctamer and homotetramer.</text>
</comment>
<comment type="subcellular location">
    <subcellularLocation>
        <location evidence="3">Cytoplasm</location>
    </subcellularLocation>
</comment>
<comment type="miscellaneous">
    <text evidence="10">Two forms of glutamine synthetase (GSI and GSII) can be found in this bacteria, GSI is a typical prokaryotic glutamine synthetase whereas GSII is similar to the eukaryotic enzyme.</text>
</comment>
<comment type="similarity">
    <text evidence="9">Belongs to the glutamine synthetase family.</text>
</comment>
<proteinExistence type="evidence at protein level"/>
<protein>
    <recommendedName>
        <fullName evidence="8">Glutamine synthetase</fullName>
        <shortName evidence="8">GS</shortName>
        <ecNumber evidence="3">6.3.1.2</ecNumber>
    </recommendedName>
    <alternativeName>
        <fullName evidence="9">Glutamate--ammonia ligase</fullName>
    </alternativeName>
    <alternativeName>
        <fullName evidence="8">Glutamine synthetase II</fullName>
        <shortName evidence="8">GSII</shortName>
    </alternativeName>
</protein>
<dbReference type="EC" id="6.3.1.2" evidence="3"/>
<dbReference type="EMBL" id="M33783">
    <property type="protein sequence ID" value="AAA26749.1"/>
    <property type="molecule type" value="Genomic_DNA"/>
</dbReference>
<dbReference type="PIR" id="A36726">
    <property type="entry name" value="AJSM2H"/>
</dbReference>
<dbReference type="SMR" id="P22878"/>
<dbReference type="GO" id="GO:0005737">
    <property type="term" value="C:cytoplasm"/>
    <property type="evidence" value="ECO:0007669"/>
    <property type="project" value="UniProtKB-SubCell"/>
</dbReference>
<dbReference type="GO" id="GO:0005524">
    <property type="term" value="F:ATP binding"/>
    <property type="evidence" value="ECO:0007669"/>
    <property type="project" value="UniProtKB-KW"/>
</dbReference>
<dbReference type="GO" id="GO:0004356">
    <property type="term" value="F:glutamine synthetase activity"/>
    <property type="evidence" value="ECO:0007669"/>
    <property type="project" value="UniProtKB-EC"/>
</dbReference>
<dbReference type="GO" id="GO:0046872">
    <property type="term" value="F:metal ion binding"/>
    <property type="evidence" value="ECO:0007669"/>
    <property type="project" value="UniProtKB-KW"/>
</dbReference>
<dbReference type="GO" id="GO:0006542">
    <property type="term" value="P:glutamine biosynthetic process"/>
    <property type="evidence" value="ECO:0007669"/>
    <property type="project" value="InterPro"/>
</dbReference>
<dbReference type="FunFam" id="3.30.590.10:FF:000011">
    <property type="entry name" value="Glutamine synthetase"/>
    <property type="match status" value="1"/>
</dbReference>
<dbReference type="Gene3D" id="3.10.20.70">
    <property type="entry name" value="Glutamine synthetase, N-terminal domain"/>
    <property type="match status" value="1"/>
</dbReference>
<dbReference type="Gene3D" id="3.30.590.10">
    <property type="entry name" value="Glutamine synthetase/guanido kinase, catalytic domain"/>
    <property type="match status" value="1"/>
</dbReference>
<dbReference type="InterPro" id="IPR048091">
    <property type="entry name" value="Gln_syn_GlnII"/>
</dbReference>
<dbReference type="InterPro" id="IPR008147">
    <property type="entry name" value="Gln_synt_N"/>
</dbReference>
<dbReference type="InterPro" id="IPR036651">
    <property type="entry name" value="Gln_synt_N_sf"/>
</dbReference>
<dbReference type="InterPro" id="IPR014746">
    <property type="entry name" value="Gln_synth/guanido_kin_cat_dom"/>
</dbReference>
<dbReference type="InterPro" id="IPR008146">
    <property type="entry name" value="Gln_synth_cat_dom"/>
</dbReference>
<dbReference type="InterPro" id="IPR027303">
    <property type="entry name" value="Gln_synth_gly_rich_site"/>
</dbReference>
<dbReference type="InterPro" id="IPR027302">
    <property type="entry name" value="Gln_synth_N_conserv_site"/>
</dbReference>
<dbReference type="InterPro" id="IPR050292">
    <property type="entry name" value="Glutamine_Synthetase"/>
</dbReference>
<dbReference type="NCBIfam" id="NF041605">
    <property type="entry name" value="gln_syn_GlnII"/>
    <property type="match status" value="1"/>
</dbReference>
<dbReference type="PANTHER" id="PTHR20852">
    <property type="entry name" value="GLUTAMINE SYNTHETASE"/>
    <property type="match status" value="1"/>
</dbReference>
<dbReference type="PANTHER" id="PTHR20852:SF57">
    <property type="entry name" value="GLUTAMINE SYNTHETASE 2 CYTOPLASMIC"/>
    <property type="match status" value="1"/>
</dbReference>
<dbReference type="Pfam" id="PF00120">
    <property type="entry name" value="Gln-synt_C"/>
    <property type="match status" value="1"/>
</dbReference>
<dbReference type="Pfam" id="PF03951">
    <property type="entry name" value="Gln-synt_N"/>
    <property type="match status" value="1"/>
</dbReference>
<dbReference type="SMART" id="SM01230">
    <property type="entry name" value="Gln-synt_C"/>
    <property type="match status" value="1"/>
</dbReference>
<dbReference type="SUPFAM" id="SSF54368">
    <property type="entry name" value="Glutamine synthetase, N-terminal domain"/>
    <property type="match status" value="1"/>
</dbReference>
<dbReference type="SUPFAM" id="SSF55931">
    <property type="entry name" value="Glutamine synthetase/guanido kinase"/>
    <property type="match status" value="1"/>
</dbReference>
<dbReference type="PROSITE" id="PS00180">
    <property type="entry name" value="GLNA_1"/>
    <property type="match status" value="1"/>
</dbReference>
<dbReference type="PROSITE" id="PS00181">
    <property type="entry name" value="GLNA_ATP"/>
    <property type="match status" value="1"/>
</dbReference>
<dbReference type="PROSITE" id="PS51986">
    <property type="entry name" value="GS_BETA_GRASP"/>
    <property type="match status" value="1"/>
</dbReference>
<dbReference type="PROSITE" id="PS51987">
    <property type="entry name" value="GS_CATALYTIC"/>
    <property type="match status" value="1"/>
</dbReference>
<keyword id="KW-0067">ATP-binding</keyword>
<keyword id="KW-0963">Cytoplasm</keyword>
<keyword id="KW-0903">Direct protein sequencing</keyword>
<keyword id="KW-0436">Ligase</keyword>
<keyword id="KW-0460">Magnesium</keyword>
<keyword id="KW-0479">Metal-binding</keyword>
<keyword id="KW-0547">Nucleotide-binding</keyword>
<reference key="1">
    <citation type="journal article" date="1990" name="J. Bacteriol.">
        <title>Streptomyces hygroscopicus has two glutamine synthetase genes.</title>
        <authorList>
            <person name="Kumada Y."/>
            <person name="Takano E."/>
            <person name="Nagaoka K."/>
            <person name="Thompson C.J."/>
        </authorList>
    </citation>
    <scope>NUCLEOTIDE SEQUENCE [GENOMIC DNA]</scope>
    <scope>PROTEIN SEQUENCE OF 2-21</scope>
</reference>
<name>GLNA2_STRHY</name>
<organism>
    <name type="scientific">Streptomyces hygroscopicus</name>
    <dbReference type="NCBI Taxonomy" id="1912"/>
    <lineage>
        <taxon>Bacteria</taxon>
        <taxon>Bacillati</taxon>
        <taxon>Actinomycetota</taxon>
        <taxon>Actinomycetes</taxon>
        <taxon>Kitasatosporales</taxon>
        <taxon>Streptomycetaceae</taxon>
        <taxon>Streptomyces</taxon>
        <taxon>Streptomyces violaceusniger group</taxon>
    </lineage>
</organism>
<sequence>MSIKAEYIWIDGTQPTAKLRSKTKILSDGSRLPRWGFDGSSTNQAEGHASDLVLEPVFSCPDPIRGGDHLLVLCEVLHTDLTPHPSNTRALLRPVAERFAGQEPIFGIEQEYTFLKGDRPLGFPEGGGYPAPQADYYCGVGADAIFGREIVEKHLDLCLAAGLGLSGINAEVMPGQWEFQVGALPPLEVSDHMWVARWLLHRVAEEFGVTASLDAKPAKGDWNGAGAHTNFSTRAMREGYDPIITACEALGQDDKPLEHVRQYGTGIEDRLTGAHETAPWDAYSYGASDRGASVRIPWQVEVEKKGYIEDRRPNANVDPYVVTRLMVDTCCTELARREQI</sequence>
<accession>P22878</accession>
<feature type="initiator methionine" description="Removed" evidence="7">
    <location>
        <position position="1"/>
    </location>
</feature>
<feature type="chain" id="PRO_0000153267" description="Glutamine synthetase">
    <location>
        <begin position="2"/>
        <end position="340"/>
    </location>
</feature>
<feature type="domain" description="GS beta-grasp" evidence="5">
    <location>
        <begin position="3"/>
        <end position="82"/>
    </location>
</feature>
<feature type="domain" description="GS catalytic" evidence="6">
    <location>
        <begin position="88"/>
        <end position="340"/>
    </location>
</feature>
<feature type="binding site" evidence="2">
    <location>
        <position position="109"/>
    </location>
    <ligand>
        <name>Mg(2+)</name>
        <dbReference type="ChEBI" id="CHEBI:18420"/>
    </ligand>
</feature>
<feature type="binding site" evidence="2">
    <location>
        <position position="111"/>
    </location>
    <ligand>
        <name>Mg(2+)</name>
        <dbReference type="ChEBI" id="CHEBI:18420"/>
    </ligand>
</feature>
<feature type="binding site" evidence="2">
    <location>
        <position position="171"/>
    </location>
    <ligand>
        <name>Mg(2+)</name>
        <dbReference type="ChEBI" id="CHEBI:18420"/>
    </ligand>
</feature>
<feature type="binding site" evidence="2">
    <location>
        <position position="178"/>
    </location>
    <ligand>
        <name>Mg(2+)</name>
        <dbReference type="ChEBI" id="CHEBI:18420"/>
    </ligand>
</feature>
<feature type="binding site" evidence="1">
    <location>
        <position position="276"/>
    </location>
    <ligand>
        <name>L-glutamate</name>
        <dbReference type="ChEBI" id="CHEBI:29985"/>
    </ligand>
</feature>
<gene>
    <name evidence="8" type="primary">glnB</name>
</gene>
<evidence type="ECO:0000250" key="1">
    <source>
        <dbReference type="UniProtKB" id="P0A1P6"/>
    </source>
</evidence>
<evidence type="ECO:0000250" key="2">
    <source>
        <dbReference type="UniProtKB" id="P12425"/>
    </source>
</evidence>
<evidence type="ECO:0000250" key="3">
    <source>
        <dbReference type="UniProtKB" id="P16580"/>
    </source>
</evidence>
<evidence type="ECO:0000250" key="4">
    <source>
        <dbReference type="UniProtKB" id="Q02154"/>
    </source>
</evidence>
<evidence type="ECO:0000255" key="5">
    <source>
        <dbReference type="PROSITE-ProRule" id="PRU01330"/>
    </source>
</evidence>
<evidence type="ECO:0000255" key="6">
    <source>
        <dbReference type="PROSITE-ProRule" id="PRU01331"/>
    </source>
</evidence>
<evidence type="ECO:0000269" key="7">
    <source>
    </source>
</evidence>
<evidence type="ECO:0000303" key="8">
    <source>
    </source>
</evidence>
<evidence type="ECO:0000305" key="9"/>
<evidence type="ECO:0000305" key="10">
    <source>
    </source>
</evidence>